<feature type="chain" id="PRO_0000284121" description="Transmembrane protein 53-A">
    <location>
        <begin position="1"/>
        <end position="285"/>
    </location>
</feature>
<feature type="transmembrane region" description="Helical" evidence="2">
    <location>
        <begin position="165"/>
        <end position="185"/>
    </location>
</feature>
<evidence type="ECO:0000250" key="1">
    <source>
        <dbReference type="UniProtKB" id="Q9D0Z3"/>
    </source>
</evidence>
<evidence type="ECO:0000255" key="2"/>
<evidence type="ECO:0000305" key="3"/>
<comment type="function">
    <text evidence="1">Ensures normal bone formation, through the negative regulation of bone morphogenetic protein (BMP) signaling in osteoblast lineage cells by blocking cytoplasm-nucleus translocation of phosphorylated SMAD proteins.</text>
</comment>
<comment type="subcellular location">
    <subcellularLocation>
        <location evidence="1">Nucleus outer membrane</location>
        <topology evidence="3">Single-pass membrane protein</topology>
    </subcellularLocation>
</comment>
<comment type="similarity">
    <text evidence="3">Belongs to the TMEM53 family.</text>
</comment>
<gene>
    <name type="primary">tmem53-a</name>
</gene>
<proteinExistence type="evidence at transcript level"/>
<reference key="1">
    <citation type="submission" date="2004-12" db="EMBL/GenBank/DDBJ databases">
        <authorList>
            <consortium name="NIH - Xenopus Gene Collection (XGC) project"/>
        </authorList>
    </citation>
    <scope>NUCLEOTIDE SEQUENCE [LARGE SCALE MRNA]</scope>
    <source>
        <tissue>Testis</tissue>
    </source>
</reference>
<dbReference type="EMBL" id="BC087518">
    <property type="protein sequence ID" value="AAH87518.1"/>
    <property type="molecule type" value="mRNA"/>
</dbReference>
<dbReference type="RefSeq" id="NP_001088819.1">
    <property type="nucleotide sequence ID" value="NM_001095350.1"/>
</dbReference>
<dbReference type="ESTHER" id="xenla-tm53a">
    <property type="family name" value="Duf_829"/>
</dbReference>
<dbReference type="DNASU" id="496092"/>
<dbReference type="GeneID" id="496092"/>
<dbReference type="KEGG" id="xla:496092"/>
<dbReference type="AGR" id="Xenbase:XB-GENE-1018177"/>
<dbReference type="CTD" id="496092"/>
<dbReference type="Xenbase" id="XB-GENE-1018177">
    <property type="gene designation" value="tmem53.S"/>
</dbReference>
<dbReference type="OMA" id="VECLFWR"/>
<dbReference type="OrthoDB" id="77878at2759"/>
<dbReference type="Proteomes" id="UP000186698">
    <property type="component" value="Chromosome 4S"/>
</dbReference>
<dbReference type="Bgee" id="496092">
    <property type="expression patterns" value="Expressed in oocyte and 19 other cell types or tissues"/>
</dbReference>
<dbReference type="GO" id="GO:0031965">
    <property type="term" value="C:nuclear membrane"/>
    <property type="evidence" value="ECO:0000250"/>
    <property type="project" value="UniProtKB"/>
</dbReference>
<dbReference type="GO" id="GO:0005640">
    <property type="term" value="C:nuclear outer membrane"/>
    <property type="evidence" value="ECO:0000250"/>
    <property type="project" value="UniProtKB"/>
</dbReference>
<dbReference type="GO" id="GO:0030514">
    <property type="term" value="P:negative regulation of BMP signaling pathway"/>
    <property type="evidence" value="ECO:0000250"/>
    <property type="project" value="UniProtKB"/>
</dbReference>
<dbReference type="GO" id="GO:0030279">
    <property type="term" value="P:negative regulation of ossification"/>
    <property type="evidence" value="ECO:0000250"/>
    <property type="project" value="UniProtKB"/>
</dbReference>
<dbReference type="GO" id="GO:0045668">
    <property type="term" value="P:negative regulation of osteoblast differentiation"/>
    <property type="evidence" value="ECO:0000250"/>
    <property type="project" value="UniProtKB"/>
</dbReference>
<dbReference type="GO" id="GO:0046822">
    <property type="term" value="P:regulation of nucleocytoplasmic transport"/>
    <property type="evidence" value="ECO:0000250"/>
    <property type="project" value="UniProtKB"/>
</dbReference>
<dbReference type="Gene3D" id="3.40.50.1820">
    <property type="entry name" value="alpha/beta hydrolase"/>
    <property type="match status" value="1"/>
</dbReference>
<dbReference type="InterPro" id="IPR029058">
    <property type="entry name" value="AB_hydrolase_fold"/>
</dbReference>
<dbReference type="InterPro" id="IPR008547">
    <property type="entry name" value="DUF829_TMEM53"/>
</dbReference>
<dbReference type="PANTHER" id="PTHR12265">
    <property type="entry name" value="TRANSMEMBRANE PROTEIN 53"/>
    <property type="match status" value="1"/>
</dbReference>
<dbReference type="PANTHER" id="PTHR12265:SF30">
    <property type="entry name" value="TRANSMEMBRANE PROTEIN 53"/>
    <property type="match status" value="1"/>
</dbReference>
<dbReference type="Pfam" id="PF05705">
    <property type="entry name" value="DUF829"/>
    <property type="match status" value="1"/>
</dbReference>
<dbReference type="SUPFAM" id="SSF53474">
    <property type="entry name" value="alpha/beta-Hydrolases"/>
    <property type="match status" value="1"/>
</dbReference>
<organism>
    <name type="scientific">Xenopus laevis</name>
    <name type="common">African clawed frog</name>
    <dbReference type="NCBI Taxonomy" id="8355"/>
    <lineage>
        <taxon>Eukaryota</taxon>
        <taxon>Metazoa</taxon>
        <taxon>Chordata</taxon>
        <taxon>Craniata</taxon>
        <taxon>Vertebrata</taxon>
        <taxon>Euteleostomi</taxon>
        <taxon>Amphibia</taxon>
        <taxon>Batrachia</taxon>
        <taxon>Anura</taxon>
        <taxon>Pipoidea</taxon>
        <taxon>Pipidae</taxon>
        <taxon>Xenopodinae</taxon>
        <taxon>Xenopus</taxon>
        <taxon>Xenopus</taxon>
    </lineage>
</organism>
<keyword id="KW-0217">Developmental protein</keyword>
<keyword id="KW-0472">Membrane</keyword>
<keyword id="KW-0539">Nucleus</keyword>
<keyword id="KW-1185">Reference proteome</keyword>
<keyword id="KW-0812">Transmembrane</keyword>
<keyword id="KW-1133">Transmembrane helix</keyword>
<protein>
    <recommendedName>
        <fullName>Transmembrane protein 53-A</fullName>
    </recommendedName>
</protein>
<name>TM53A_XENLA</name>
<accession>Q5PPS7</accession>
<sequence>MGDSELDYTIEFPEPSLQGWPWDPEREPVVILLGWGGCKDHYLAKYSAIYHNQGCTVIKYTAAWKAVFITESLGLNSLREDAKKLLELLFDYEIEKSPIVFHVFSNGGFMLYRYIVELLHSHCPLNKLHVVGTIFDSAPGNRNVIGSVRALDTILRTSTNKAFRFLALAAFAILVIILRILLYPLTRFLHENHYDAMKKDPSRWPQLYLYSRADPIISYLDVESMIAARRRRCLPTETLDFGKSEHVSHFRRFPQRYSEICTSFLRDCVRKASISMLRSEHPVSF</sequence>